<dbReference type="EC" id="2.8.1.10" evidence="1"/>
<dbReference type="EMBL" id="CP000948">
    <property type="protein sequence ID" value="ACB04993.1"/>
    <property type="molecule type" value="Genomic_DNA"/>
</dbReference>
<dbReference type="RefSeq" id="WP_000944104.1">
    <property type="nucleotide sequence ID" value="NC_010473.1"/>
</dbReference>
<dbReference type="SMR" id="B1XBZ3"/>
<dbReference type="KEGG" id="ecd:ECDH10B_4179"/>
<dbReference type="HOGENOM" id="CLU_062233_1_0_6"/>
<dbReference type="UniPathway" id="UPA00060"/>
<dbReference type="GO" id="GO:0005737">
    <property type="term" value="C:cytoplasm"/>
    <property type="evidence" value="ECO:0007669"/>
    <property type="project" value="UniProtKB-SubCell"/>
</dbReference>
<dbReference type="GO" id="GO:1990107">
    <property type="term" value="F:thiazole synthase activity"/>
    <property type="evidence" value="ECO:0007669"/>
    <property type="project" value="UniProtKB-EC"/>
</dbReference>
<dbReference type="GO" id="GO:0009229">
    <property type="term" value="P:thiamine diphosphate biosynthetic process"/>
    <property type="evidence" value="ECO:0007669"/>
    <property type="project" value="UniProtKB-UniRule"/>
</dbReference>
<dbReference type="CDD" id="cd04728">
    <property type="entry name" value="ThiG"/>
    <property type="match status" value="1"/>
</dbReference>
<dbReference type="FunFam" id="3.20.20.70:FF:000049">
    <property type="entry name" value="Thiazole synthase"/>
    <property type="match status" value="1"/>
</dbReference>
<dbReference type="Gene3D" id="3.20.20.70">
    <property type="entry name" value="Aldolase class I"/>
    <property type="match status" value="1"/>
</dbReference>
<dbReference type="HAMAP" id="MF_00443">
    <property type="entry name" value="ThiG"/>
    <property type="match status" value="1"/>
</dbReference>
<dbReference type="InterPro" id="IPR013785">
    <property type="entry name" value="Aldolase_TIM"/>
</dbReference>
<dbReference type="InterPro" id="IPR033983">
    <property type="entry name" value="Thiazole_synthase_ThiG"/>
</dbReference>
<dbReference type="InterPro" id="IPR008867">
    <property type="entry name" value="ThiG"/>
</dbReference>
<dbReference type="PANTHER" id="PTHR34266">
    <property type="entry name" value="THIAZOLE SYNTHASE"/>
    <property type="match status" value="1"/>
</dbReference>
<dbReference type="PANTHER" id="PTHR34266:SF2">
    <property type="entry name" value="THIAZOLE SYNTHASE"/>
    <property type="match status" value="1"/>
</dbReference>
<dbReference type="Pfam" id="PF05690">
    <property type="entry name" value="ThiG"/>
    <property type="match status" value="1"/>
</dbReference>
<dbReference type="SUPFAM" id="SSF110399">
    <property type="entry name" value="ThiG-like"/>
    <property type="match status" value="1"/>
</dbReference>
<gene>
    <name evidence="1" type="primary">thiG</name>
    <name type="ordered locus">ECDH10B_4179</name>
</gene>
<evidence type="ECO:0000255" key="1">
    <source>
        <dbReference type="HAMAP-Rule" id="MF_00443"/>
    </source>
</evidence>
<organism>
    <name type="scientific">Escherichia coli (strain K12 / DH10B)</name>
    <dbReference type="NCBI Taxonomy" id="316385"/>
    <lineage>
        <taxon>Bacteria</taxon>
        <taxon>Pseudomonadati</taxon>
        <taxon>Pseudomonadota</taxon>
        <taxon>Gammaproteobacteria</taxon>
        <taxon>Enterobacterales</taxon>
        <taxon>Enterobacteriaceae</taxon>
        <taxon>Escherichia</taxon>
    </lineage>
</organism>
<name>THIG_ECODH</name>
<reference key="1">
    <citation type="journal article" date="2008" name="J. Bacteriol.">
        <title>The complete genome sequence of Escherichia coli DH10B: insights into the biology of a laboratory workhorse.</title>
        <authorList>
            <person name="Durfee T."/>
            <person name="Nelson R."/>
            <person name="Baldwin S."/>
            <person name="Plunkett G. III"/>
            <person name="Burland V."/>
            <person name="Mau B."/>
            <person name="Petrosino J.F."/>
            <person name="Qin X."/>
            <person name="Muzny D.M."/>
            <person name="Ayele M."/>
            <person name="Gibbs R.A."/>
            <person name="Csorgo B."/>
            <person name="Posfai G."/>
            <person name="Weinstock G.M."/>
            <person name="Blattner F.R."/>
        </authorList>
    </citation>
    <scope>NUCLEOTIDE SEQUENCE [LARGE SCALE GENOMIC DNA]</scope>
    <source>
        <strain>K12 / DH10B</strain>
    </source>
</reference>
<proteinExistence type="inferred from homology"/>
<sequence length="256" mass="26896">MLRIADKTFDSHLFTGTGKFASSQLMVEAIRASGSQLVTLAMKRVDLRQHNDAILEPLIAAGVTLLPNTSGAKTAEEAIFAAHLAREALGTNWLKLEIHPDARWLLPDPIETLKAAETLVQQGFVVLPYCGADPVLCKRLEEVGCAAVMPLGAPIGSNQGLETRAMLEIIIQQATVPVVVDAGIGVPSHAAQALEMGADAVLVNTAIAVADDPVNMAKAFRLAVEAGLLARQSGPGSRSYFAHATSPLTGFLEASA</sequence>
<accession>B1XBZ3</accession>
<protein>
    <recommendedName>
        <fullName evidence="1">Thiazole synthase</fullName>
        <ecNumber evidence="1">2.8.1.10</ecNumber>
    </recommendedName>
</protein>
<comment type="function">
    <text evidence="1">Catalyzes the rearrangement of 1-deoxy-D-xylulose 5-phosphate (DXP) to produce the thiazole phosphate moiety of thiamine. Sulfur is provided by the thiocarboxylate moiety of the carrier protein ThiS. In vitro, sulfur can be provided by H(2)S.</text>
</comment>
<comment type="catalytic activity">
    <reaction evidence="1">
        <text>[ThiS sulfur-carrier protein]-C-terminal-Gly-aminoethanethioate + 2-iminoacetate + 1-deoxy-D-xylulose 5-phosphate = [ThiS sulfur-carrier protein]-C-terminal Gly-Gly + 2-[(2R,5Z)-2-carboxy-4-methylthiazol-5(2H)-ylidene]ethyl phosphate + 2 H2O + H(+)</text>
        <dbReference type="Rhea" id="RHEA:26297"/>
        <dbReference type="Rhea" id="RHEA-COMP:12909"/>
        <dbReference type="Rhea" id="RHEA-COMP:19908"/>
        <dbReference type="ChEBI" id="CHEBI:15377"/>
        <dbReference type="ChEBI" id="CHEBI:15378"/>
        <dbReference type="ChEBI" id="CHEBI:57792"/>
        <dbReference type="ChEBI" id="CHEBI:62899"/>
        <dbReference type="ChEBI" id="CHEBI:77846"/>
        <dbReference type="ChEBI" id="CHEBI:90778"/>
        <dbReference type="ChEBI" id="CHEBI:232372"/>
        <dbReference type="EC" id="2.8.1.10"/>
    </reaction>
</comment>
<comment type="pathway">
    <text evidence="1">Cofactor biosynthesis; thiamine diphosphate biosynthesis.</text>
</comment>
<comment type="subunit">
    <text evidence="1">Homotetramer. Forms heterodimers with either ThiH or ThiS.</text>
</comment>
<comment type="subcellular location">
    <subcellularLocation>
        <location evidence="1">Cytoplasm</location>
    </subcellularLocation>
</comment>
<comment type="similarity">
    <text evidence="1">Belongs to the ThiG family.</text>
</comment>
<keyword id="KW-0963">Cytoplasm</keyword>
<keyword id="KW-0704">Schiff base</keyword>
<keyword id="KW-0784">Thiamine biosynthesis</keyword>
<keyword id="KW-0808">Transferase</keyword>
<feature type="chain" id="PRO_1000196855" description="Thiazole synthase">
    <location>
        <begin position="1"/>
        <end position="256"/>
    </location>
</feature>
<feature type="active site" description="Schiff-base intermediate with DXP" evidence="1">
    <location>
        <position position="95"/>
    </location>
</feature>
<feature type="binding site" evidence="1">
    <location>
        <position position="156"/>
    </location>
    <ligand>
        <name>1-deoxy-D-xylulose 5-phosphate</name>
        <dbReference type="ChEBI" id="CHEBI:57792"/>
    </ligand>
</feature>
<feature type="binding site" evidence="1">
    <location>
        <begin position="182"/>
        <end position="183"/>
    </location>
    <ligand>
        <name>1-deoxy-D-xylulose 5-phosphate</name>
        <dbReference type="ChEBI" id="CHEBI:57792"/>
    </ligand>
</feature>
<feature type="binding site" evidence="1">
    <location>
        <begin position="204"/>
        <end position="205"/>
    </location>
    <ligand>
        <name>1-deoxy-D-xylulose 5-phosphate</name>
        <dbReference type="ChEBI" id="CHEBI:57792"/>
    </ligand>
</feature>